<name>NR13_COTJA</name>
<dbReference type="EMBL" id="X84418">
    <property type="protein sequence ID" value="CAA59136.1"/>
    <property type="molecule type" value="Genomic_DNA"/>
</dbReference>
<dbReference type="SMR" id="Q90343"/>
<dbReference type="Proteomes" id="UP000694412">
    <property type="component" value="Unplaced"/>
</dbReference>
<dbReference type="GO" id="GO:0005741">
    <property type="term" value="C:mitochondrial outer membrane"/>
    <property type="evidence" value="ECO:0007669"/>
    <property type="project" value="TreeGrafter"/>
</dbReference>
<dbReference type="GO" id="GO:0005886">
    <property type="term" value="C:plasma membrane"/>
    <property type="evidence" value="ECO:0007669"/>
    <property type="project" value="UniProtKB-SubCell"/>
</dbReference>
<dbReference type="GO" id="GO:0051400">
    <property type="term" value="F:BH domain binding"/>
    <property type="evidence" value="ECO:0007669"/>
    <property type="project" value="TreeGrafter"/>
</dbReference>
<dbReference type="GO" id="GO:0097192">
    <property type="term" value="P:extrinsic apoptotic signaling pathway in absence of ligand"/>
    <property type="evidence" value="ECO:0007669"/>
    <property type="project" value="TreeGrafter"/>
</dbReference>
<dbReference type="GO" id="GO:0008630">
    <property type="term" value="P:intrinsic apoptotic signaling pathway in response to DNA damage"/>
    <property type="evidence" value="ECO:0007669"/>
    <property type="project" value="TreeGrafter"/>
</dbReference>
<dbReference type="GO" id="GO:0042981">
    <property type="term" value="P:regulation of apoptotic process"/>
    <property type="evidence" value="ECO:0007669"/>
    <property type="project" value="InterPro"/>
</dbReference>
<dbReference type="GO" id="GO:0001836">
    <property type="term" value="P:release of cytochrome c from mitochondria"/>
    <property type="evidence" value="ECO:0007669"/>
    <property type="project" value="TreeGrafter"/>
</dbReference>
<dbReference type="FunFam" id="1.10.437.10:FF:000027">
    <property type="entry name" value="Anti-apoptotic protein NR13"/>
    <property type="match status" value="1"/>
</dbReference>
<dbReference type="Gene3D" id="1.10.437.10">
    <property type="entry name" value="Blc2-like"/>
    <property type="match status" value="1"/>
</dbReference>
<dbReference type="InterPro" id="IPR036834">
    <property type="entry name" value="Bcl-2-like_sf"/>
</dbReference>
<dbReference type="InterPro" id="IPR046371">
    <property type="entry name" value="Bcl-2_BH1-3"/>
</dbReference>
<dbReference type="InterPro" id="IPR026298">
    <property type="entry name" value="Bcl-2_fam"/>
</dbReference>
<dbReference type="InterPro" id="IPR002475">
    <property type="entry name" value="Bcl2-like"/>
</dbReference>
<dbReference type="InterPro" id="IPR020717">
    <property type="entry name" value="Bcl2_BH1_motif_CS"/>
</dbReference>
<dbReference type="InterPro" id="IPR020726">
    <property type="entry name" value="Bcl2_BH2_motif_CS"/>
</dbReference>
<dbReference type="PANTHER" id="PTHR11256">
    <property type="entry name" value="BCL-2 RELATED"/>
    <property type="match status" value="1"/>
</dbReference>
<dbReference type="PANTHER" id="PTHR11256:SF47">
    <property type="entry name" value="BCL-2-LIKE PROTEIN 10"/>
    <property type="match status" value="1"/>
</dbReference>
<dbReference type="Pfam" id="PF00452">
    <property type="entry name" value="Bcl-2"/>
    <property type="match status" value="1"/>
</dbReference>
<dbReference type="PRINTS" id="PR01862">
    <property type="entry name" value="BCL2FAMILY"/>
</dbReference>
<dbReference type="SMART" id="SM00337">
    <property type="entry name" value="BCL"/>
    <property type="match status" value="1"/>
</dbReference>
<dbReference type="SUPFAM" id="SSF56854">
    <property type="entry name" value="Bcl-2 inhibitors of programmed cell death"/>
    <property type="match status" value="1"/>
</dbReference>
<dbReference type="PROSITE" id="PS50062">
    <property type="entry name" value="BCL2_FAMILY"/>
    <property type="match status" value="1"/>
</dbReference>
<dbReference type="PROSITE" id="PS01080">
    <property type="entry name" value="BH1"/>
    <property type="match status" value="1"/>
</dbReference>
<dbReference type="PROSITE" id="PS01258">
    <property type="entry name" value="BH2"/>
    <property type="match status" value="1"/>
</dbReference>
<protein>
    <recommendedName>
        <fullName>Anti-apoptotic protein NR13</fullName>
    </recommendedName>
    <alternativeName>
        <fullName>Apoptosis regulator Nr-13</fullName>
    </alternativeName>
</protein>
<proteinExistence type="evidence at transcript level"/>
<sequence>MPGSLKEETALLLEDYFQHRAGGAALPPSATAAELRRAAAELERRERPFFRSCAPLARAEPREAAALLRKVAAQLETDGGLNWGRLLALVVFAGTLAAALAESACEEGPSRLAAALTAYLAEEQGEWMEEHGGWDGFCRFFGRHGSQPADQNSTLSNAIMAAAGFGIAGLAFLLVVR</sequence>
<reference key="1">
    <citation type="journal article" date="1995" name="EMBO J.">
        <title>A Bcl-2-related gene is activated in avian cells transformed by the Rous sarcoma virus.</title>
        <authorList>
            <person name="Gillet G."/>
            <person name="Guerin M."/>
            <person name="Trembleau A."/>
            <person name="Brun G."/>
        </authorList>
    </citation>
    <scope>NUCLEOTIDE SEQUENCE [GENOMIC DNA]</scope>
    <scope>FUNCTION</scope>
    <scope>TISSUE SPECIFICITY</scope>
    <scope>DEVELOPMENTAL STAGE</scope>
    <scope>INDUCTION</scope>
    <source>
        <tissue>Fibroblast</tissue>
        <tissue>Neuroretina</tissue>
    </source>
</reference>
<organism>
    <name type="scientific">Coturnix japonica</name>
    <name type="common">Japanese quail</name>
    <name type="synonym">Coturnix coturnix japonica</name>
    <dbReference type="NCBI Taxonomy" id="93934"/>
    <lineage>
        <taxon>Eukaryota</taxon>
        <taxon>Metazoa</taxon>
        <taxon>Chordata</taxon>
        <taxon>Craniata</taxon>
        <taxon>Vertebrata</taxon>
        <taxon>Euteleostomi</taxon>
        <taxon>Archelosauria</taxon>
        <taxon>Archosauria</taxon>
        <taxon>Dinosauria</taxon>
        <taxon>Saurischia</taxon>
        <taxon>Theropoda</taxon>
        <taxon>Coelurosauria</taxon>
        <taxon>Aves</taxon>
        <taxon>Neognathae</taxon>
        <taxon>Galloanserae</taxon>
        <taxon>Galliformes</taxon>
        <taxon>Phasianidae</taxon>
        <taxon>Perdicinae</taxon>
        <taxon>Coturnix</taxon>
    </lineage>
</organism>
<keyword id="KW-0053">Apoptosis</keyword>
<keyword id="KW-1003">Cell membrane</keyword>
<keyword id="KW-0472">Membrane</keyword>
<keyword id="KW-1185">Reference proteome</keyword>
<keyword id="KW-0812">Transmembrane</keyword>
<keyword id="KW-1133">Transmembrane helix</keyword>
<accession>Q90343</accession>
<evidence type="ECO:0000250" key="1"/>
<evidence type="ECO:0000255" key="2"/>
<evidence type="ECO:0000269" key="3">
    <source>
    </source>
</evidence>
<evidence type="ECO:0000305" key="4"/>
<gene>
    <name type="primary">NR13</name>
</gene>
<comment type="function">
    <text evidence="3">Shows anti-apoptotic properties. Counteract the pro-apoptotic activity of BAX.</text>
</comment>
<comment type="subunit">
    <text evidence="1">Interacts with BAX.</text>
</comment>
<comment type="subcellular location">
    <subcellularLocation>
        <location>Cell membrane</location>
        <topology>Multi-pass membrane protein</topology>
    </subcellularLocation>
</comment>
<comment type="tissue specificity">
    <text evidence="3">Mainly expressed in neural and muscular tissues.</text>
</comment>
<comment type="developmental stage">
    <text evidence="3">Expression is dramatically down-regulated after embryonic day 7 in the optic tectum, and correlates with the onset of apoptosis in this area.</text>
</comment>
<comment type="induction">
    <text evidence="3">By Rous sarcoma virus.</text>
</comment>
<comment type="similarity">
    <text evidence="4">Belongs to the Bcl-2 family.</text>
</comment>
<feature type="chain" id="PRO_0000143071" description="Anti-apoptotic protein NR13">
    <location>
        <begin position="1"/>
        <end position="177"/>
    </location>
</feature>
<feature type="transmembrane region" description="Helical" evidence="2">
    <location>
        <begin position="86"/>
        <end position="106"/>
    </location>
</feature>
<feature type="transmembrane region" description="Helical" evidence="2">
    <location>
        <begin position="156"/>
        <end position="176"/>
    </location>
</feature>
<feature type="short sequence motif" description="BH1">
    <location>
        <begin position="75"/>
        <end position="94"/>
    </location>
</feature>
<feature type="short sequence motif" description="BH2">
    <location>
        <begin position="126"/>
        <end position="141"/>
    </location>
</feature>